<evidence type="ECO:0000255" key="1">
    <source>
        <dbReference type="HAMAP-Rule" id="MF_01356"/>
    </source>
</evidence>
<gene>
    <name evidence="1" type="primary">nuoB</name>
    <name type="ordered locus">PP_4120</name>
    <name type="ORF">PP4120</name>
</gene>
<organism>
    <name type="scientific">Pseudomonas putida (strain ATCC 47054 / DSM 6125 / CFBP 8728 / NCIMB 11950 / KT2440)</name>
    <dbReference type="NCBI Taxonomy" id="160488"/>
    <lineage>
        <taxon>Bacteria</taxon>
        <taxon>Pseudomonadati</taxon>
        <taxon>Pseudomonadota</taxon>
        <taxon>Gammaproteobacteria</taxon>
        <taxon>Pseudomonadales</taxon>
        <taxon>Pseudomonadaceae</taxon>
        <taxon>Pseudomonas</taxon>
    </lineage>
</organism>
<sequence>MQYNLTRIDPDAPNEQYPVGERETVTDQLLEDQVHKNIFMGKLEDVLRGAVNWGRKNSLWPYNFGLSCCYVEMTTAFTAPHDIARFGAEVIRASPRQADFMVIAGTCFVKMAPIIQRLYEQMLEPKWVISMGSCANSGGMYDIYSVVQGVDKFLPVDVYVPGCPPRPEAFLQGLMLLQESIGQERRPLSWVVGDQGIYRAEMPAQKDLRREQRIAVTNLRSPDEV</sequence>
<name>NUOB_PSEPK</name>
<dbReference type="EC" id="7.1.1.-" evidence="1"/>
<dbReference type="EMBL" id="AE015451">
    <property type="protein sequence ID" value="AAN69703.1"/>
    <property type="molecule type" value="Genomic_DNA"/>
</dbReference>
<dbReference type="RefSeq" id="NP_746239.1">
    <property type="nucleotide sequence ID" value="NC_002947.4"/>
</dbReference>
<dbReference type="RefSeq" id="WP_003251429.1">
    <property type="nucleotide sequence ID" value="NZ_CP169744.1"/>
</dbReference>
<dbReference type="SMR" id="Q88FH6"/>
<dbReference type="STRING" id="160488.PP_4120"/>
<dbReference type="PaxDb" id="160488-PP_4120"/>
<dbReference type="KEGG" id="ppu:PP_4120"/>
<dbReference type="PATRIC" id="fig|160488.4.peg.4379"/>
<dbReference type="eggNOG" id="COG0377">
    <property type="taxonomic scope" value="Bacteria"/>
</dbReference>
<dbReference type="HOGENOM" id="CLU_055737_7_3_6"/>
<dbReference type="OrthoDB" id="9786737at2"/>
<dbReference type="PhylomeDB" id="Q88FH6"/>
<dbReference type="BioCyc" id="MetaCyc:G1G01-4387-MONOMER"/>
<dbReference type="BioCyc" id="PPUT160488:G1G01-4387-MONOMER"/>
<dbReference type="Proteomes" id="UP000000556">
    <property type="component" value="Chromosome"/>
</dbReference>
<dbReference type="GO" id="GO:0005886">
    <property type="term" value="C:plasma membrane"/>
    <property type="evidence" value="ECO:0007669"/>
    <property type="project" value="UniProtKB-SubCell"/>
</dbReference>
<dbReference type="GO" id="GO:0045271">
    <property type="term" value="C:respiratory chain complex I"/>
    <property type="evidence" value="ECO:0007669"/>
    <property type="project" value="TreeGrafter"/>
</dbReference>
<dbReference type="GO" id="GO:0051539">
    <property type="term" value="F:4 iron, 4 sulfur cluster binding"/>
    <property type="evidence" value="ECO:0007669"/>
    <property type="project" value="UniProtKB-KW"/>
</dbReference>
<dbReference type="GO" id="GO:0005506">
    <property type="term" value="F:iron ion binding"/>
    <property type="evidence" value="ECO:0007669"/>
    <property type="project" value="UniProtKB-UniRule"/>
</dbReference>
<dbReference type="GO" id="GO:0008137">
    <property type="term" value="F:NADH dehydrogenase (ubiquinone) activity"/>
    <property type="evidence" value="ECO:0007669"/>
    <property type="project" value="InterPro"/>
</dbReference>
<dbReference type="GO" id="GO:0050136">
    <property type="term" value="F:NADH:ubiquinone reductase (non-electrogenic) activity"/>
    <property type="evidence" value="ECO:0007669"/>
    <property type="project" value="UniProtKB-UniRule"/>
</dbReference>
<dbReference type="GO" id="GO:0048038">
    <property type="term" value="F:quinone binding"/>
    <property type="evidence" value="ECO:0007669"/>
    <property type="project" value="UniProtKB-KW"/>
</dbReference>
<dbReference type="GO" id="GO:0009060">
    <property type="term" value="P:aerobic respiration"/>
    <property type="evidence" value="ECO:0007669"/>
    <property type="project" value="TreeGrafter"/>
</dbReference>
<dbReference type="GO" id="GO:0015990">
    <property type="term" value="P:electron transport coupled proton transport"/>
    <property type="evidence" value="ECO:0007669"/>
    <property type="project" value="TreeGrafter"/>
</dbReference>
<dbReference type="FunFam" id="3.40.50.12280:FF:000002">
    <property type="entry name" value="NADH-quinone oxidoreductase subunit B"/>
    <property type="match status" value="1"/>
</dbReference>
<dbReference type="Gene3D" id="3.40.50.12280">
    <property type="match status" value="1"/>
</dbReference>
<dbReference type="HAMAP" id="MF_01356">
    <property type="entry name" value="NDH1_NuoB"/>
    <property type="match status" value="1"/>
</dbReference>
<dbReference type="InterPro" id="IPR006137">
    <property type="entry name" value="NADH_UbQ_OxRdtase-like_20kDa"/>
</dbReference>
<dbReference type="InterPro" id="IPR006138">
    <property type="entry name" value="NADH_UQ_OxRdtase_20Kd_su"/>
</dbReference>
<dbReference type="NCBIfam" id="TIGR01957">
    <property type="entry name" value="nuoB_fam"/>
    <property type="match status" value="1"/>
</dbReference>
<dbReference type="NCBIfam" id="NF005012">
    <property type="entry name" value="PRK06411.1"/>
    <property type="match status" value="1"/>
</dbReference>
<dbReference type="PANTHER" id="PTHR11995">
    <property type="entry name" value="NADH DEHYDROGENASE"/>
    <property type="match status" value="1"/>
</dbReference>
<dbReference type="PANTHER" id="PTHR11995:SF14">
    <property type="entry name" value="NADH DEHYDROGENASE [UBIQUINONE] IRON-SULFUR PROTEIN 7, MITOCHONDRIAL"/>
    <property type="match status" value="1"/>
</dbReference>
<dbReference type="Pfam" id="PF01058">
    <property type="entry name" value="Oxidored_q6"/>
    <property type="match status" value="1"/>
</dbReference>
<dbReference type="SUPFAM" id="SSF56770">
    <property type="entry name" value="HydA/Nqo6-like"/>
    <property type="match status" value="1"/>
</dbReference>
<dbReference type="PROSITE" id="PS01150">
    <property type="entry name" value="COMPLEX1_20K"/>
    <property type="match status" value="1"/>
</dbReference>
<feature type="chain" id="PRO_0000376316" description="NADH-quinone oxidoreductase subunit B">
    <location>
        <begin position="1"/>
        <end position="225"/>
    </location>
</feature>
<feature type="binding site" evidence="1">
    <location>
        <position position="68"/>
    </location>
    <ligand>
        <name>[4Fe-4S] cluster</name>
        <dbReference type="ChEBI" id="CHEBI:49883"/>
    </ligand>
</feature>
<feature type="binding site" evidence="1">
    <location>
        <position position="69"/>
    </location>
    <ligand>
        <name>[4Fe-4S] cluster</name>
        <dbReference type="ChEBI" id="CHEBI:49883"/>
    </ligand>
</feature>
<feature type="binding site" evidence="1">
    <location>
        <position position="134"/>
    </location>
    <ligand>
        <name>[4Fe-4S] cluster</name>
        <dbReference type="ChEBI" id="CHEBI:49883"/>
    </ligand>
</feature>
<feature type="binding site" evidence="1">
    <location>
        <position position="163"/>
    </location>
    <ligand>
        <name>[4Fe-4S] cluster</name>
        <dbReference type="ChEBI" id="CHEBI:49883"/>
    </ligand>
</feature>
<reference key="1">
    <citation type="journal article" date="2002" name="Environ. Microbiol.">
        <title>Complete genome sequence and comparative analysis of the metabolically versatile Pseudomonas putida KT2440.</title>
        <authorList>
            <person name="Nelson K.E."/>
            <person name="Weinel C."/>
            <person name="Paulsen I.T."/>
            <person name="Dodson R.J."/>
            <person name="Hilbert H."/>
            <person name="Martins dos Santos V.A.P."/>
            <person name="Fouts D.E."/>
            <person name="Gill S.R."/>
            <person name="Pop M."/>
            <person name="Holmes M."/>
            <person name="Brinkac L.M."/>
            <person name="Beanan M.J."/>
            <person name="DeBoy R.T."/>
            <person name="Daugherty S.C."/>
            <person name="Kolonay J.F."/>
            <person name="Madupu R."/>
            <person name="Nelson W.C."/>
            <person name="White O."/>
            <person name="Peterson J.D."/>
            <person name="Khouri H.M."/>
            <person name="Hance I."/>
            <person name="Chris Lee P."/>
            <person name="Holtzapple E.K."/>
            <person name="Scanlan D."/>
            <person name="Tran K."/>
            <person name="Moazzez A."/>
            <person name="Utterback T.R."/>
            <person name="Rizzo M."/>
            <person name="Lee K."/>
            <person name="Kosack D."/>
            <person name="Moestl D."/>
            <person name="Wedler H."/>
            <person name="Lauber J."/>
            <person name="Stjepandic D."/>
            <person name="Hoheisel J."/>
            <person name="Straetz M."/>
            <person name="Heim S."/>
            <person name="Kiewitz C."/>
            <person name="Eisen J.A."/>
            <person name="Timmis K.N."/>
            <person name="Duesterhoeft A."/>
            <person name="Tuemmler B."/>
            <person name="Fraser C.M."/>
        </authorList>
    </citation>
    <scope>NUCLEOTIDE SEQUENCE [LARGE SCALE GENOMIC DNA]</scope>
    <source>
        <strain>ATCC 47054 / DSM 6125 / CFBP 8728 / NCIMB 11950 / KT2440</strain>
    </source>
</reference>
<keyword id="KW-0004">4Fe-4S</keyword>
<keyword id="KW-0997">Cell inner membrane</keyword>
<keyword id="KW-1003">Cell membrane</keyword>
<keyword id="KW-0408">Iron</keyword>
<keyword id="KW-0411">Iron-sulfur</keyword>
<keyword id="KW-0472">Membrane</keyword>
<keyword id="KW-0479">Metal-binding</keyword>
<keyword id="KW-0520">NAD</keyword>
<keyword id="KW-0874">Quinone</keyword>
<keyword id="KW-1185">Reference proteome</keyword>
<keyword id="KW-1278">Translocase</keyword>
<keyword id="KW-0813">Transport</keyword>
<keyword id="KW-0830">Ubiquinone</keyword>
<accession>Q88FH6</accession>
<comment type="function">
    <text evidence="1">NDH-1 shuttles electrons from NADH, via FMN and iron-sulfur (Fe-S) centers, to quinones in the respiratory chain. The immediate electron acceptor for the enzyme in this species is believed to be ubiquinone. Couples the redox reaction to proton translocation (for every two electrons transferred, four hydrogen ions are translocated across the cytoplasmic membrane), and thus conserves the redox energy in a proton gradient.</text>
</comment>
<comment type="catalytic activity">
    <reaction evidence="1">
        <text>a quinone + NADH + 5 H(+)(in) = a quinol + NAD(+) + 4 H(+)(out)</text>
        <dbReference type="Rhea" id="RHEA:57888"/>
        <dbReference type="ChEBI" id="CHEBI:15378"/>
        <dbReference type="ChEBI" id="CHEBI:24646"/>
        <dbReference type="ChEBI" id="CHEBI:57540"/>
        <dbReference type="ChEBI" id="CHEBI:57945"/>
        <dbReference type="ChEBI" id="CHEBI:132124"/>
    </reaction>
</comment>
<comment type="cofactor">
    <cofactor evidence="1">
        <name>[4Fe-4S] cluster</name>
        <dbReference type="ChEBI" id="CHEBI:49883"/>
    </cofactor>
    <text evidence="1">Binds 1 [4Fe-4S] cluster.</text>
</comment>
<comment type="subunit">
    <text evidence="1">NDH-1 is composed of 13 different subunits. Subunits NuoB, CD, E, F, and G constitute the peripheral sector of the complex.</text>
</comment>
<comment type="subcellular location">
    <subcellularLocation>
        <location evidence="1">Cell inner membrane</location>
        <topology evidence="1">Peripheral membrane protein</topology>
        <orientation evidence="1">Cytoplasmic side</orientation>
    </subcellularLocation>
</comment>
<comment type="similarity">
    <text evidence="1">Belongs to the complex I 20 kDa subunit family.</text>
</comment>
<proteinExistence type="inferred from homology"/>
<protein>
    <recommendedName>
        <fullName evidence="1">NADH-quinone oxidoreductase subunit B</fullName>
        <ecNumber evidence="1">7.1.1.-</ecNumber>
    </recommendedName>
    <alternativeName>
        <fullName evidence="1">NADH dehydrogenase I subunit B</fullName>
    </alternativeName>
    <alternativeName>
        <fullName evidence="1">NDH-1 subunit B</fullName>
    </alternativeName>
</protein>